<keyword id="KW-0030">Aminoacyl-tRNA synthetase</keyword>
<keyword id="KW-0067">ATP-binding</keyword>
<keyword id="KW-0150">Chloroplast</keyword>
<keyword id="KW-0436">Ligase</keyword>
<keyword id="KW-0460">Magnesium</keyword>
<keyword id="KW-0479">Metal-binding</keyword>
<keyword id="KW-0547">Nucleotide-binding</keyword>
<keyword id="KW-0934">Plastid</keyword>
<keyword id="KW-0648">Protein biosynthesis</keyword>
<reference key="1">
    <citation type="submission" date="2003-11" db="EMBL/GenBank/DDBJ databases">
        <title>Whole genome sequence of Porphyra yezoensis chloroplast.</title>
        <authorList>
            <person name="Kunimoto M."/>
            <person name="Morishima K."/>
            <person name="Yoshikawa M."/>
            <person name="Fukuda S."/>
            <person name="Kobayashi T."/>
            <person name="Kobayashi M."/>
            <person name="Okazaki T."/>
            <person name="Ohara I."/>
            <person name="Nakayama I."/>
        </authorList>
    </citation>
    <scope>NUCLEOTIDE SEQUENCE [LARGE SCALE GENOMIC DNA]</scope>
    <source>
        <strain>U-51</strain>
    </source>
</reference>
<protein>
    <recommendedName>
        <fullName evidence="1">Phenylalanine--tRNA ligase beta subunit, chloroplastic</fullName>
        <ecNumber evidence="1">6.1.1.20</ecNumber>
    </recommendedName>
    <alternativeName>
        <fullName evidence="1">Phenylalanyl-tRNA synthetase beta subunit</fullName>
        <shortName evidence="1">PheRS</shortName>
    </alternativeName>
</protein>
<accession>Q1XDE1</accession>
<name>SYFB_PYRYE</name>
<geneLocation type="chloroplast"/>
<evidence type="ECO:0000255" key="1">
    <source>
        <dbReference type="HAMAP-Rule" id="MF_00283"/>
    </source>
</evidence>
<sequence>MNFLNYFYHSKKILLQKIDGQFMKVSLNWLKALGNIKTIDIDNKYSTNTAGFEVEAIESIIIGGEIDHILDISSTANRSDVLSMIGLSREVSALTGSSMFQLYINPIIDIFSKKETIISNHDLLNCDNYFAAIIDEIRVKDSPDWLKNRLLSSGFTHRNLLTDISNYIMLKWGQPINIIDLNKINNMNHKNSLTIRSNFPLGSNDQIKLNNENIELNKNILVTQVNTNVTSIAGIGSNSDFDTDYNTKSILVESAIFKQSVVRKSSRVLNIRTESSIRQERGLNVDNWKNAHFEALALITDLTCGNIRDTFCREKITDHALNINLSIKKVHDILGPIMYNGQTRFLFFEEIQNILHSLNFDLIYQNKENIEVTVPNYRREDVFREIDVIEEIARIYGYHKFRSSVPNIQFNKRLSTKRKFIDKSRSILRNLGLTELVHYSLIKSKGNIALNNPLIQDYSNLRGSLLEGLIESNLYNIKQSNQTIDSFEIGTVFHNDQNKIVETTNLAIILGGNLDIRSTWSHPAHSLNWYEAKGIVENFFQRLNRQIEWTKKDILDGRIKFIQKGKFATLIYNNIIIGIFSELNQATYSELGLNTKLFFLEVNLNILEDCHNEFNYLSYQIQPYSKYPSIIRDLSLIIPKNMEIKYLLKLLDQFYDKDLESTTLFDQYIDESIGKEKKSIGLRFTYRSNEKTLTNSEIDYKQHQLQKKIVKQLNLKIRQ</sequence>
<comment type="catalytic activity">
    <reaction evidence="1">
        <text>tRNA(Phe) + L-phenylalanine + ATP = L-phenylalanyl-tRNA(Phe) + AMP + diphosphate + H(+)</text>
        <dbReference type="Rhea" id="RHEA:19413"/>
        <dbReference type="Rhea" id="RHEA-COMP:9668"/>
        <dbReference type="Rhea" id="RHEA-COMP:9699"/>
        <dbReference type="ChEBI" id="CHEBI:15378"/>
        <dbReference type="ChEBI" id="CHEBI:30616"/>
        <dbReference type="ChEBI" id="CHEBI:33019"/>
        <dbReference type="ChEBI" id="CHEBI:58095"/>
        <dbReference type="ChEBI" id="CHEBI:78442"/>
        <dbReference type="ChEBI" id="CHEBI:78531"/>
        <dbReference type="ChEBI" id="CHEBI:456215"/>
        <dbReference type="EC" id="6.1.1.20"/>
    </reaction>
</comment>
<comment type="cofactor">
    <cofactor evidence="1">
        <name>Mg(2+)</name>
        <dbReference type="ChEBI" id="CHEBI:18420"/>
    </cofactor>
    <text evidence="1">Binds 2 magnesium ions per tetramer.</text>
</comment>
<comment type="subunit">
    <text evidence="1">Tetramer of two alpha and two beta subunits.</text>
</comment>
<comment type="subcellular location">
    <subcellularLocation>
        <location>Plastid</location>
        <location>Chloroplast</location>
    </subcellularLocation>
</comment>
<comment type="similarity">
    <text evidence="1">Belongs to the phenylalanyl-tRNA synthetase beta subunit family. Type 1 subfamily.</text>
</comment>
<dbReference type="EC" id="6.1.1.20" evidence="1"/>
<dbReference type="EMBL" id="AP006715">
    <property type="protein sequence ID" value="BAE92470.1"/>
    <property type="molecule type" value="Genomic_DNA"/>
</dbReference>
<dbReference type="SMR" id="Q1XDE1"/>
<dbReference type="GO" id="GO:0009507">
    <property type="term" value="C:chloroplast"/>
    <property type="evidence" value="ECO:0007669"/>
    <property type="project" value="UniProtKB-SubCell"/>
</dbReference>
<dbReference type="GO" id="GO:0009328">
    <property type="term" value="C:phenylalanine-tRNA ligase complex"/>
    <property type="evidence" value="ECO:0007669"/>
    <property type="project" value="TreeGrafter"/>
</dbReference>
<dbReference type="GO" id="GO:0005524">
    <property type="term" value="F:ATP binding"/>
    <property type="evidence" value="ECO:0007669"/>
    <property type="project" value="UniProtKB-UniRule"/>
</dbReference>
<dbReference type="GO" id="GO:0000287">
    <property type="term" value="F:magnesium ion binding"/>
    <property type="evidence" value="ECO:0007669"/>
    <property type="project" value="UniProtKB-UniRule"/>
</dbReference>
<dbReference type="GO" id="GO:0004826">
    <property type="term" value="F:phenylalanine-tRNA ligase activity"/>
    <property type="evidence" value="ECO:0007669"/>
    <property type="project" value="UniProtKB-UniRule"/>
</dbReference>
<dbReference type="GO" id="GO:0003723">
    <property type="term" value="F:RNA binding"/>
    <property type="evidence" value="ECO:0007669"/>
    <property type="project" value="InterPro"/>
</dbReference>
<dbReference type="GO" id="GO:0006432">
    <property type="term" value="P:phenylalanyl-tRNA aminoacylation"/>
    <property type="evidence" value="ECO:0007669"/>
    <property type="project" value="UniProtKB-UniRule"/>
</dbReference>
<dbReference type="CDD" id="cd00769">
    <property type="entry name" value="PheRS_beta_core"/>
    <property type="match status" value="1"/>
</dbReference>
<dbReference type="Gene3D" id="3.30.56.10">
    <property type="match status" value="2"/>
</dbReference>
<dbReference type="Gene3D" id="3.30.930.10">
    <property type="entry name" value="Bira Bifunctional Protein, Domain 2"/>
    <property type="match status" value="1"/>
</dbReference>
<dbReference type="Gene3D" id="3.30.70.380">
    <property type="entry name" value="Ferrodoxin-fold anticodon-binding domain"/>
    <property type="match status" value="1"/>
</dbReference>
<dbReference type="Gene3D" id="3.50.40.10">
    <property type="entry name" value="Phenylalanyl-trna Synthetase, Chain B, domain 3"/>
    <property type="match status" value="1"/>
</dbReference>
<dbReference type="HAMAP" id="MF_00283">
    <property type="entry name" value="Phe_tRNA_synth_beta1"/>
    <property type="match status" value="1"/>
</dbReference>
<dbReference type="InterPro" id="IPR045864">
    <property type="entry name" value="aa-tRNA-synth_II/BPL/LPL"/>
</dbReference>
<dbReference type="InterPro" id="IPR005146">
    <property type="entry name" value="B3/B4_tRNA-bd"/>
</dbReference>
<dbReference type="InterPro" id="IPR009061">
    <property type="entry name" value="DNA-bd_dom_put_sf"/>
</dbReference>
<dbReference type="InterPro" id="IPR005121">
    <property type="entry name" value="Fdx_antiC-bd"/>
</dbReference>
<dbReference type="InterPro" id="IPR036690">
    <property type="entry name" value="Fdx_antiC-bd_sf"/>
</dbReference>
<dbReference type="InterPro" id="IPR045060">
    <property type="entry name" value="Phe-tRNA-ligase_IIc_bsu"/>
</dbReference>
<dbReference type="InterPro" id="IPR004532">
    <property type="entry name" value="Phe-tRNA-ligase_IIc_bsu_bact"/>
</dbReference>
<dbReference type="InterPro" id="IPR020825">
    <property type="entry name" value="Phe-tRNA_synthase-like_B3/B4"/>
</dbReference>
<dbReference type="InterPro" id="IPR041616">
    <property type="entry name" value="PheRS_beta_core"/>
</dbReference>
<dbReference type="InterPro" id="IPR005147">
    <property type="entry name" value="tRNA_synthase_B5-dom"/>
</dbReference>
<dbReference type="NCBIfam" id="TIGR00472">
    <property type="entry name" value="pheT_bact"/>
    <property type="match status" value="1"/>
</dbReference>
<dbReference type="PANTHER" id="PTHR10947:SF0">
    <property type="entry name" value="PHENYLALANINE--TRNA LIGASE BETA SUBUNIT"/>
    <property type="match status" value="1"/>
</dbReference>
<dbReference type="PANTHER" id="PTHR10947">
    <property type="entry name" value="PHENYLALANYL-TRNA SYNTHETASE BETA CHAIN AND LEUCINE-RICH REPEAT-CONTAINING PROTEIN 47"/>
    <property type="match status" value="1"/>
</dbReference>
<dbReference type="Pfam" id="PF03483">
    <property type="entry name" value="B3_4"/>
    <property type="match status" value="1"/>
</dbReference>
<dbReference type="Pfam" id="PF03484">
    <property type="entry name" value="B5"/>
    <property type="match status" value="1"/>
</dbReference>
<dbReference type="Pfam" id="PF03147">
    <property type="entry name" value="FDX-ACB"/>
    <property type="match status" value="1"/>
</dbReference>
<dbReference type="Pfam" id="PF17759">
    <property type="entry name" value="tRNA_synthFbeta"/>
    <property type="match status" value="1"/>
</dbReference>
<dbReference type="SMART" id="SM00873">
    <property type="entry name" value="B3_4"/>
    <property type="match status" value="1"/>
</dbReference>
<dbReference type="SMART" id="SM00874">
    <property type="entry name" value="B5"/>
    <property type="match status" value="1"/>
</dbReference>
<dbReference type="SMART" id="SM00896">
    <property type="entry name" value="FDX-ACB"/>
    <property type="match status" value="1"/>
</dbReference>
<dbReference type="SUPFAM" id="SSF54991">
    <property type="entry name" value="Anticodon-binding domain of PheRS"/>
    <property type="match status" value="1"/>
</dbReference>
<dbReference type="SUPFAM" id="SSF55681">
    <property type="entry name" value="Class II aaRS and biotin synthetases"/>
    <property type="match status" value="1"/>
</dbReference>
<dbReference type="SUPFAM" id="SSF56037">
    <property type="entry name" value="PheT/TilS domain"/>
    <property type="match status" value="1"/>
</dbReference>
<dbReference type="SUPFAM" id="SSF46955">
    <property type="entry name" value="Putative DNA-binding domain"/>
    <property type="match status" value="2"/>
</dbReference>
<dbReference type="PROSITE" id="PS51483">
    <property type="entry name" value="B5"/>
    <property type="match status" value="1"/>
</dbReference>
<dbReference type="PROSITE" id="PS51447">
    <property type="entry name" value="FDX_ACB"/>
    <property type="match status" value="1"/>
</dbReference>
<gene>
    <name evidence="1" type="primary">pheT</name>
</gene>
<organism>
    <name type="scientific">Pyropia yezoensis</name>
    <name type="common">Susabi-nori</name>
    <name type="synonym">Porphyra yezoensis</name>
    <dbReference type="NCBI Taxonomy" id="2788"/>
    <lineage>
        <taxon>Eukaryota</taxon>
        <taxon>Rhodophyta</taxon>
        <taxon>Bangiophyceae</taxon>
        <taxon>Bangiales</taxon>
        <taxon>Bangiaceae</taxon>
        <taxon>Pyropia</taxon>
    </lineage>
</organism>
<feature type="chain" id="PRO_0000277247" description="Phenylalanine--tRNA ligase beta subunit, chloroplastic">
    <location>
        <begin position="1"/>
        <end position="719"/>
    </location>
</feature>
<feature type="domain" description="B5" evidence="1">
    <location>
        <begin position="318"/>
        <end position="403"/>
    </location>
</feature>
<feature type="domain" description="FDX-ACB" evidence="1">
    <location>
        <begin position="625"/>
        <end position="718"/>
    </location>
</feature>
<feature type="binding site" evidence="1">
    <location>
        <position position="381"/>
    </location>
    <ligand>
        <name>Mg(2+)</name>
        <dbReference type="ChEBI" id="CHEBI:18420"/>
        <note>shared with alpha subunit</note>
    </ligand>
</feature>
<feature type="binding site" evidence="1">
    <location>
        <position position="387"/>
    </location>
    <ligand>
        <name>Mg(2+)</name>
        <dbReference type="ChEBI" id="CHEBI:18420"/>
        <note>shared with alpha subunit</note>
    </ligand>
</feature>
<feature type="binding site" evidence="1">
    <location>
        <position position="390"/>
    </location>
    <ligand>
        <name>Mg(2+)</name>
        <dbReference type="ChEBI" id="CHEBI:18420"/>
        <note>shared with alpha subunit</note>
    </ligand>
</feature>
<feature type="binding site" evidence="1">
    <location>
        <position position="391"/>
    </location>
    <ligand>
        <name>Mg(2+)</name>
        <dbReference type="ChEBI" id="CHEBI:18420"/>
        <note>shared with alpha subunit</note>
    </ligand>
</feature>
<proteinExistence type="inferred from homology"/>